<dbReference type="EC" id="2.1.3.15" evidence="1"/>
<dbReference type="EMBL" id="CP000458">
    <property type="protein sequence ID" value="ABK08827.1"/>
    <property type="molecule type" value="Genomic_DNA"/>
</dbReference>
<dbReference type="RefSeq" id="WP_006478433.1">
    <property type="nucleotide sequence ID" value="NC_008542.1"/>
</dbReference>
<dbReference type="SMR" id="A0K8K0"/>
<dbReference type="KEGG" id="bch:Bcen2424_2076"/>
<dbReference type="HOGENOM" id="CLU_015486_0_2_4"/>
<dbReference type="UniPathway" id="UPA00655">
    <property type="reaction ID" value="UER00711"/>
</dbReference>
<dbReference type="GO" id="GO:0009317">
    <property type="term" value="C:acetyl-CoA carboxylase complex"/>
    <property type="evidence" value="ECO:0007669"/>
    <property type="project" value="InterPro"/>
</dbReference>
<dbReference type="GO" id="GO:0003989">
    <property type="term" value="F:acetyl-CoA carboxylase activity"/>
    <property type="evidence" value="ECO:0007669"/>
    <property type="project" value="InterPro"/>
</dbReference>
<dbReference type="GO" id="GO:0005524">
    <property type="term" value="F:ATP binding"/>
    <property type="evidence" value="ECO:0007669"/>
    <property type="project" value="UniProtKB-KW"/>
</dbReference>
<dbReference type="GO" id="GO:0016743">
    <property type="term" value="F:carboxyl- or carbamoyltransferase activity"/>
    <property type="evidence" value="ECO:0007669"/>
    <property type="project" value="UniProtKB-UniRule"/>
</dbReference>
<dbReference type="GO" id="GO:0006633">
    <property type="term" value="P:fatty acid biosynthetic process"/>
    <property type="evidence" value="ECO:0007669"/>
    <property type="project" value="UniProtKB-KW"/>
</dbReference>
<dbReference type="GO" id="GO:2001295">
    <property type="term" value="P:malonyl-CoA biosynthetic process"/>
    <property type="evidence" value="ECO:0007669"/>
    <property type="project" value="UniProtKB-UniRule"/>
</dbReference>
<dbReference type="Gene3D" id="3.90.226.10">
    <property type="entry name" value="2-enoyl-CoA Hydratase, Chain A, domain 1"/>
    <property type="match status" value="1"/>
</dbReference>
<dbReference type="HAMAP" id="MF_00823">
    <property type="entry name" value="AcetylCoA_CT_alpha"/>
    <property type="match status" value="1"/>
</dbReference>
<dbReference type="InterPro" id="IPR001095">
    <property type="entry name" value="Acetyl_CoA_COase_a_su"/>
</dbReference>
<dbReference type="InterPro" id="IPR029045">
    <property type="entry name" value="ClpP/crotonase-like_dom_sf"/>
</dbReference>
<dbReference type="InterPro" id="IPR011763">
    <property type="entry name" value="COA_CT_C"/>
</dbReference>
<dbReference type="NCBIfam" id="TIGR00513">
    <property type="entry name" value="accA"/>
    <property type="match status" value="1"/>
</dbReference>
<dbReference type="NCBIfam" id="NF041504">
    <property type="entry name" value="AccA_sub"/>
    <property type="match status" value="1"/>
</dbReference>
<dbReference type="NCBIfam" id="NF004344">
    <property type="entry name" value="PRK05724.1"/>
    <property type="match status" value="1"/>
</dbReference>
<dbReference type="PANTHER" id="PTHR42853">
    <property type="entry name" value="ACETYL-COENZYME A CARBOXYLASE CARBOXYL TRANSFERASE SUBUNIT ALPHA"/>
    <property type="match status" value="1"/>
</dbReference>
<dbReference type="PANTHER" id="PTHR42853:SF3">
    <property type="entry name" value="ACETYL-COENZYME A CARBOXYLASE CARBOXYL TRANSFERASE SUBUNIT ALPHA, CHLOROPLASTIC"/>
    <property type="match status" value="1"/>
</dbReference>
<dbReference type="Pfam" id="PF03255">
    <property type="entry name" value="ACCA"/>
    <property type="match status" value="1"/>
</dbReference>
<dbReference type="PRINTS" id="PR01069">
    <property type="entry name" value="ACCCTRFRASEA"/>
</dbReference>
<dbReference type="SUPFAM" id="SSF52096">
    <property type="entry name" value="ClpP/crotonase"/>
    <property type="match status" value="1"/>
</dbReference>
<dbReference type="PROSITE" id="PS50989">
    <property type="entry name" value="COA_CT_CTER"/>
    <property type="match status" value="1"/>
</dbReference>
<reference key="1">
    <citation type="submission" date="2006-08" db="EMBL/GenBank/DDBJ databases">
        <title>Complete sequence of chromosome 1 of Burkholderia cenocepacia HI2424.</title>
        <authorList>
            <person name="Copeland A."/>
            <person name="Lucas S."/>
            <person name="Lapidus A."/>
            <person name="Barry K."/>
            <person name="Detter J.C."/>
            <person name="Glavina del Rio T."/>
            <person name="Hammon N."/>
            <person name="Israni S."/>
            <person name="Pitluck S."/>
            <person name="Chain P."/>
            <person name="Malfatti S."/>
            <person name="Shin M."/>
            <person name="Vergez L."/>
            <person name="Schmutz J."/>
            <person name="Larimer F."/>
            <person name="Land M."/>
            <person name="Hauser L."/>
            <person name="Kyrpides N."/>
            <person name="Kim E."/>
            <person name="LiPuma J.J."/>
            <person name="Gonzalez C.F."/>
            <person name="Konstantinidis K."/>
            <person name="Tiedje J.M."/>
            <person name="Richardson P."/>
        </authorList>
    </citation>
    <scope>NUCLEOTIDE SEQUENCE [LARGE SCALE GENOMIC DNA]</scope>
    <source>
        <strain>HI2424</strain>
    </source>
</reference>
<proteinExistence type="inferred from homology"/>
<accession>A0K8K0</accession>
<organism>
    <name type="scientific">Burkholderia cenocepacia (strain HI2424)</name>
    <dbReference type="NCBI Taxonomy" id="331272"/>
    <lineage>
        <taxon>Bacteria</taxon>
        <taxon>Pseudomonadati</taxon>
        <taxon>Pseudomonadota</taxon>
        <taxon>Betaproteobacteria</taxon>
        <taxon>Burkholderiales</taxon>
        <taxon>Burkholderiaceae</taxon>
        <taxon>Burkholderia</taxon>
        <taxon>Burkholderia cepacia complex</taxon>
    </lineage>
</organism>
<gene>
    <name evidence="1" type="primary">accA</name>
    <name type="ordered locus">Bcen2424_2076</name>
</gene>
<protein>
    <recommendedName>
        <fullName evidence="1">Acetyl-coenzyme A carboxylase carboxyl transferase subunit alpha</fullName>
        <shortName evidence="1">ACCase subunit alpha</shortName>
        <shortName evidence="1">Acetyl-CoA carboxylase carboxyltransferase subunit alpha</shortName>
        <ecNumber evidence="1">2.1.3.15</ecNumber>
    </recommendedName>
</protein>
<name>ACCA_BURCH</name>
<evidence type="ECO:0000255" key="1">
    <source>
        <dbReference type="HAMAP-Rule" id="MF_00823"/>
    </source>
</evidence>
<evidence type="ECO:0000255" key="2">
    <source>
        <dbReference type="PROSITE-ProRule" id="PRU01137"/>
    </source>
</evidence>
<comment type="function">
    <text evidence="1">Component of the acetyl coenzyme A carboxylase (ACC) complex. First, biotin carboxylase catalyzes the carboxylation of biotin on its carrier protein (BCCP) and then the CO(2) group is transferred by the carboxyltransferase to acetyl-CoA to form malonyl-CoA.</text>
</comment>
<comment type="catalytic activity">
    <reaction evidence="1">
        <text>N(6)-carboxybiotinyl-L-lysyl-[protein] + acetyl-CoA = N(6)-biotinyl-L-lysyl-[protein] + malonyl-CoA</text>
        <dbReference type="Rhea" id="RHEA:54728"/>
        <dbReference type="Rhea" id="RHEA-COMP:10505"/>
        <dbReference type="Rhea" id="RHEA-COMP:10506"/>
        <dbReference type="ChEBI" id="CHEBI:57288"/>
        <dbReference type="ChEBI" id="CHEBI:57384"/>
        <dbReference type="ChEBI" id="CHEBI:83144"/>
        <dbReference type="ChEBI" id="CHEBI:83145"/>
        <dbReference type="EC" id="2.1.3.15"/>
    </reaction>
</comment>
<comment type="pathway">
    <text evidence="1">Lipid metabolism; malonyl-CoA biosynthesis; malonyl-CoA from acetyl-CoA: step 1/1.</text>
</comment>
<comment type="subunit">
    <text evidence="1">Acetyl-CoA carboxylase is a heterohexamer composed of biotin carboxyl carrier protein (AccB), biotin carboxylase (AccC) and two subunits each of ACCase subunit alpha (AccA) and ACCase subunit beta (AccD).</text>
</comment>
<comment type="subcellular location">
    <subcellularLocation>
        <location evidence="1">Cytoplasm</location>
    </subcellularLocation>
</comment>
<comment type="similarity">
    <text evidence="1">Belongs to the AccA family.</text>
</comment>
<sequence length="323" mass="35611">MKTTFLDFEQPIAELEAKIEELRFVQDDSAVDISEEIERLSKKSQQLTKDLYANLSPWQVSQIARHPQRPYTLDYVAELFTDFHELHGDRAFADDLSIVGGLARFGGHPCMVIGHQKGRDTKERAARNFGMPRPEGYRKAERLMRLAEKFGLPIFTFVDTPGAYPGIGAEERGQSEAIGRNLYVMAELKTPIITTVIGEGGSGGALAIAVADTVMMLQFSTYSVISPEGCASILWKSAAKAPEAAEALGLTAHRLKALGLIDKIINEPLGGAHRDPKGMAALLRRALADSLRQFQGMSIDALRERRFERLMAYGKFKETTPGA</sequence>
<feature type="chain" id="PRO_1000062586" description="Acetyl-coenzyme A carboxylase carboxyl transferase subunit alpha">
    <location>
        <begin position="1"/>
        <end position="323"/>
    </location>
</feature>
<feature type="domain" description="CoA carboxyltransferase C-terminal" evidence="2">
    <location>
        <begin position="39"/>
        <end position="293"/>
    </location>
</feature>
<keyword id="KW-0067">ATP-binding</keyword>
<keyword id="KW-0963">Cytoplasm</keyword>
<keyword id="KW-0275">Fatty acid biosynthesis</keyword>
<keyword id="KW-0276">Fatty acid metabolism</keyword>
<keyword id="KW-0444">Lipid biosynthesis</keyword>
<keyword id="KW-0443">Lipid metabolism</keyword>
<keyword id="KW-0547">Nucleotide-binding</keyword>
<keyword id="KW-0808">Transferase</keyword>